<gene>
    <name evidence="1" type="primary">gmhA</name>
    <name type="ordered locus">Glov_0978</name>
</gene>
<feature type="chain" id="PRO_1000092275" description="Phosphoheptose isomerase">
    <location>
        <begin position="1"/>
        <end position="196"/>
    </location>
</feature>
<feature type="domain" description="SIS" evidence="1">
    <location>
        <begin position="34"/>
        <end position="193"/>
    </location>
</feature>
<feature type="binding site" evidence="1">
    <location>
        <begin position="49"/>
        <end position="51"/>
    </location>
    <ligand>
        <name>substrate</name>
    </ligand>
</feature>
<feature type="binding site" evidence="1">
    <location>
        <position position="58"/>
    </location>
    <ligand>
        <name>Zn(2+)</name>
        <dbReference type="ChEBI" id="CHEBI:29105"/>
    </ligand>
</feature>
<feature type="binding site" evidence="1">
    <location>
        <position position="62"/>
    </location>
    <ligand>
        <name>substrate</name>
    </ligand>
</feature>
<feature type="binding site" evidence="1">
    <location>
        <position position="62"/>
    </location>
    <ligand>
        <name>Zn(2+)</name>
        <dbReference type="ChEBI" id="CHEBI:29105"/>
    </ligand>
</feature>
<feature type="binding site" evidence="1">
    <location>
        <begin position="91"/>
        <end position="92"/>
    </location>
    <ligand>
        <name>substrate</name>
    </ligand>
</feature>
<feature type="binding site" evidence="1">
    <location>
        <begin position="117"/>
        <end position="119"/>
    </location>
    <ligand>
        <name>substrate</name>
    </ligand>
</feature>
<feature type="binding site" evidence="1">
    <location>
        <position position="122"/>
    </location>
    <ligand>
        <name>substrate</name>
    </ligand>
</feature>
<feature type="binding site" evidence="1">
    <location>
        <position position="169"/>
    </location>
    <ligand>
        <name>substrate</name>
    </ligand>
</feature>
<feature type="binding site" evidence="1">
    <location>
        <position position="169"/>
    </location>
    <ligand>
        <name>Zn(2+)</name>
        <dbReference type="ChEBI" id="CHEBI:29105"/>
    </ligand>
</feature>
<feature type="binding site" evidence="1">
    <location>
        <position position="177"/>
    </location>
    <ligand>
        <name>Zn(2+)</name>
        <dbReference type="ChEBI" id="CHEBI:29105"/>
    </ligand>
</feature>
<accession>B3E5N0</accession>
<dbReference type="EC" id="5.3.1.28" evidence="1"/>
<dbReference type="EMBL" id="CP001089">
    <property type="protein sequence ID" value="ACD94701.1"/>
    <property type="molecule type" value="Genomic_DNA"/>
</dbReference>
<dbReference type="RefSeq" id="WP_012469051.1">
    <property type="nucleotide sequence ID" value="NC_010814.1"/>
</dbReference>
<dbReference type="SMR" id="B3E5N0"/>
<dbReference type="STRING" id="398767.Glov_0978"/>
<dbReference type="KEGG" id="glo:Glov_0978"/>
<dbReference type="eggNOG" id="COG0279">
    <property type="taxonomic scope" value="Bacteria"/>
</dbReference>
<dbReference type="HOGENOM" id="CLU_080999_4_0_7"/>
<dbReference type="OrthoDB" id="9810929at2"/>
<dbReference type="UniPathway" id="UPA00041">
    <property type="reaction ID" value="UER00436"/>
</dbReference>
<dbReference type="Proteomes" id="UP000002420">
    <property type="component" value="Chromosome"/>
</dbReference>
<dbReference type="GO" id="GO:0005737">
    <property type="term" value="C:cytoplasm"/>
    <property type="evidence" value="ECO:0007669"/>
    <property type="project" value="UniProtKB-SubCell"/>
</dbReference>
<dbReference type="GO" id="GO:0097367">
    <property type="term" value="F:carbohydrate derivative binding"/>
    <property type="evidence" value="ECO:0007669"/>
    <property type="project" value="InterPro"/>
</dbReference>
<dbReference type="GO" id="GO:0008968">
    <property type="term" value="F:D-sedoheptulose 7-phosphate isomerase activity"/>
    <property type="evidence" value="ECO:0007669"/>
    <property type="project" value="UniProtKB-UniRule"/>
</dbReference>
<dbReference type="GO" id="GO:0008270">
    <property type="term" value="F:zinc ion binding"/>
    <property type="evidence" value="ECO:0007669"/>
    <property type="project" value="UniProtKB-UniRule"/>
</dbReference>
<dbReference type="GO" id="GO:0005975">
    <property type="term" value="P:carbohydrate metabolic process"/>
    <property type="evidence" value="ECO:0007669"/>
    <property type="project" value="UniProtKB-UniRule"/>
</dbReference>
<dbReference type="GO" id="GO:2001061">
    <property type="term" value="P:D-glycero-D-manno-heptose 7-phosphate biosynthetic process"/>
    <property type="evidence" value="ECO:0007669"/>
    <property type="project" value="UniProtKB-UniPathway"/>
</dbReference>
<dbReference type="CDD" id="cd05006">
    <property type="entry name" value="SIS_GmhA"/>
    <property type="match status" value="1"/>
</dbReference>
<dbReference type="Gene3D" id="3.40.50.10490">
    <property type="entry name" value="Glucose-6-phosphate isomerase like protein, domain 1"/>
    <property type="match status" value="1"/>
</dbReference>
<dbReference type="HAMAP" id="MF_00067">
    <property type="entry name" value="GmhA"/>
    <property type="match status" value="1"/>
</dbReference>
<dbReference type="InterPro" id="IPR035461">
    <property type="entry name" value="GmhA/DiaA"/>
</dbReference>
<dbReference type="InterPro" id="IPR004515">
    <property type="entry name" value="Phosphoheptose_Isoase"/>
</dbReference>
<dbReference type="InterPro" id="IPR001347">
    <property type="entry name" value="SIS_dom"/>
</dbReference>
<dbReference type="InterPro" id="IPR046348">
    <property type="entry name" value="SIS_dom_sf"/>
</dbReference>
<dbReference type="InterPro" id="IPR050099">
    <property type="entry name" value="SIS_GmhA/DiaA_subfam"/>
</dbReference>
<dbReference type="NCBIfam" id="TIGR00441">
    <property type="entry name" value="gmhA"/>
    <property type="match status" value="1"/>
</dbReference>
<dbReference type="PANTHER" id="PTHR30390:SF6">
    <property type="entry name" value="DNAA INITIATOR-ASSOCIATING PROTEIN DIAA"/>
    <property type="match status" value="1"/>
</dbReference>
<dbReference type="PANTHER" id="PTHR30390">
    <property type="entry name" value="SEDOHEPTULOSE 7-PHOSPHATE ISOMERASE / DNAA INITIATOR-ASSOCIATING FACTOR FOR REPLICATION INITIATION"/>
    <property type="match status" value="1"/>
</dbReference>
<dbReference type="Pfam" id="PF13580">
    <property type="entry name" value="SIS_2"/>
    <property type="match status" value="1"/>
</dbReference>
<dbReference type="SUPFAM" id="SSF53697">
    <property type="entry name" value="SIS domain"/>
    <property type="match status" value="1"/>
</dbReference>
<dbReference type="PROSITE" id="PS51464">
    <property type="entry name" value="SIS"/>
    <property type="match status" value="1"/>
</dbReference>
<organism>
    <name type="scientific">Trichlorobacter lovleyi (strain ATCC BAA-1151 / DSM 17278 / SZ)</name>
    <name type="common">Geobacter lovleyi</name>
    <dbReference type="NCBI Taxonomy" id="398767"/>
    <lineage>
        <taxon>Bacteria</taxon>
        <taxon>Pseudomonadati</taxon>
        <taxon>Thermodesulfobacteriota</taxon>
        <taxon>Desulfuromonadia</taxon>
        <taxon>Geobacterales</taxon>
        <taxon>Geobacteraceae</taxon>
        <taxon>Trichlorobacter</taxon>
    </lineage>
</organism>
<reference key="1">
    <citation type="submission" date="2008-05" db="EMBL/GenBank/DDBJ databases">
        <title>Complete sequence of chromosome of Geobacter lovleyi SZ.</title>
        <authorList>
            <consortium name="US DOE Joint Genome Institute"/>
            <person name="Lucas S."/>
            <person name="Copeland A."/>
            <person name="Lapidus A."/>
            <person name="Glavina del Rio T."/>
            <person name="Dalin E."/>
            <person name="Tice H."/>
            <person name="Bruce D."/>
            <person name="Goodwin L."/>
            <person name="Pitluck S."/>
            <person name="Chertkov O."/>
            <person name="Meincke L."/>
            <person name="Brettin T."/>
            <person name="Detter J.C."/>
            <person name="Han C."/>
            <person name="Tapia R."/>
            <person name="Kuske C.R."/>
            <person name="Schmutz J."/>
            <person name="Larimer F."/>
            <person name="Land M."/>
            <person name="Hauser L."/>
            <person name="Kyrpides N."/>
            <person name="Mikhailova N."/>
            <person name="Sung Y."/>
            <person name="Fletcher K.E."/>
            <person name="Ritalahti K.M."/>
            <person name="Loeffler F.E."/>
            <person name="Richardson P."/>
        </authorList>
    </citation>
    <scope>NUCLEOTIDE SEQUENCE [LARGE SCALE GENOMIC DNA]</scope>
    <source>
        <strain>ATCC BAA-1151 / DSM 17278 / SZ</strain>
    </source>
</reference>
<comment type="function">
    <text evidence="1">Catalyzes the isomerization of sedoheptulose 7-phosphate in D-glycero-D-manno-heptose 7-phosphate.</text>
</comment>
<comment type="catalytic activity">
    <reaction evidence="1">
        <text>2 D-sedoheptulose 7-phosphate = D-glycero-alpha-D-manno-heptose 7-phosphate + D-glycero-beta-D-manno-heptose 7-phosphate</text>
        <dbReference type="Rhea" id="RHEA:27489"/>
        <dbReference type="ChEBI" id="CHEBI:57483"/>
        <dbReference type="ChEBI" id="CHEBI:60203"/>
        <dbReference type="ChEBI" id="CHEBI:60204"/>
        <dbReference type="EC" id="5.3.1.28"/>
    </reaction>
</comment>
<comment type="cofactor">
    <cofactor evidence="1">
        <name>Zn(2+)</name>
        <dbReference type="ChEBI" id="CHEBI:29105"/>
    </cofactor>
    <text evidence="1">Binds 1 zinc ion per subunit.</text>
</comment>
<comment type="pathway">
    <text evidence="1">Carbohydrate biosynthesis; D-glycero-D-manno-heptose 7-phosphate biosynthesis; D-glycero-alpha-D-manno-heptose 7-phosphate and D-glycero-beta-D-manno-heptose 7-phosphate from sedoheptulose 7-phosphate: step 1/1.</text>
</comment>
<comment type="subunit">
    <text evidence="1">Homotetramer.</text>
</comment>
<comment type="subcellular location">
    <subcellularLocation>
        <location evidence="1">Cytoplasm</location>
    </subcellularLocation>
</comment>
<comment type="miscellaneous">
    <text evidence="1">The reaction produces a racemic mixture of D-glycero-alpha-D-manno-heptose 7-phosphate and D-glycero-beta-D-manno-heptose 7-phosphate.</text>
</comment>
<comment type="similarity">
    <text evidence="1">Belongs to the SIS family. GmhA subfamily.</text>
</comment>
<name>GMHA_TRIL1</name>
<proteinExistence type="inferred from homology"/>
<evidence type="ECO:0000255" key="1">
    <source>
        <dbReference type="HAMAP-Rule" id="MF_00067"/>
    </source>
</evidence>
<keyword id="KW-0119">Carbohydrate metabolism</keyword>
<keyword id="KW-0963">Cytoplasm</keyword>
<keyword id="KW-0413">Isomerase</keyword>
<keyword id="KW-0479">Metal-binding</keyword>
<keyword id="KW-1185">Reference proteome</keyword>
<keyword id="KW-0862">Zinc</keyword>
<protein>
    <recommendedName>
        <fullName evidence="1">Phosphoheptose isomerase</fullName>
        <ecNumber evidence="1">5.3.1.28</ecNumber>
    </recommendedName>
    <alternativeName>
        <fullName evidence="1">Sedoheptulose 7-phosphate isomerase</fullName>
    </alternativeName>
</protein>
<sequence>MQSFIAKQLQDHLALFQKMEAELTAPVAELAERLIETFKIGNKLLIMGNGGSAADAQHFAGEIVSRFRIERPGLPAIALSTDTSIITAIGNDYGFERIFSRQVEALAVPGDAVIGISTSGNSPNVQKALEVARQAGCTTIGLLGKDGGSIKAVCDIPLIIPSNDTPRVQEGHIAVIHILCDLIEQGLFGIFAGEGR</sequence>